<name>CYAY_TOLAT</name>
<protein>
    <recommendedName>
        <fullName evidence="1">Iron-sulfur cluster assembly protein CyaY</fullName>
    </recommendedName>
</protein>
<reference key="1">
    <citation type="submission" date="2009-05" db="EMBL/GenBank/DDBJ databases">
        <title>Complete sequence of Tolumonas auensis DSM 9187.</title>
        <authorList>
            <consortium name="US DOE Joint Genome Institute"/>
            <person name="Lucas S."/>
            <person name="Copeland A."/>
            <person name="Lapidus A."/>
            <person name="Glavina del Rio T."/>
            <person name="Tice H."/>
            <person name="Bruce D."/>
            <person name="Goodwin L."/>
            <person name="Pitluck S."/>
            <person name="Chertkov O."/>
            <person name="Brettin T."/>
            <person name="Detter J.C."/>
            <person name="Han C."/>
            <person name="Larimer F."/>
            <person name="Land M."/>
            <person name="Hauser L."/>
            <person name="Kyrpides N."/>
            <person name="Mikhailova N."/>
            <person name="Spring S."/>
            <person name="Beller H."/>
        </authorList>
    </citation>
    <scope>NUCLEOTIDE SEQUENCE [LARGE SCALE GENOMIC DNA]</scope>
    <source>
        <strain>DSM 9187 / NBRC 110442 / TA 4</strain>
    </source>
</reference>
<keyword id="KW-0408">Iron</keyword>
<keyword id="KW-0479">Metal-binding</keyword>
<keyword id="KW-1185">Reference proteome</keyword>
<accession>C4LDV0</accession>
<feature type="chain" id="PRO_1000203291" description="Iron-sulfur cluster assembly protein CyaY">
    <location>
        <begin position="1"/>
        <end position="104"/>
    </location>
</feature>
<organism>
    <name type="scientific">Tolumonas auensis (strain DSM 9187 / NBRC 110442 / TA 4)</name>
    <dbReference type="NCBI Taxonomy" id="595494"/>
    <lineage>
        <taxon>Bacteria</taxon>
        <taxon>Pseudomonadati</taxon>
        <taxon>Pseudomonadota</taxon>
        <taxon>Gammaproteobacteria</taxon>
        <taxon>Aeromonadales</taxon>
        <taxon>Aeromonadaceae</taxon>
        <taxon>Tolumonas</taxon>
    </lineage>
</organism>
<comment type="function">
    <text evidence="1">Involved in iron-sulfur (Fe-S) cluster assembly. May act as a regulator of Fe-S biogenesis.</text>
</comment>
<comment type="similarity">
    <text evidence="1">Belongs to the frataxin family.</text>
</comment>
<proteinExistence type="inferred from homology"/>
<evidence type="ECO:0000255" key="1">
    <source>
        <dbReference type="HAMAP-Rule" id="MF_00142"/>
    </source>
</evidence>
<dbReference type="EMBL" id="CP001616">
    <property type="protein sequence ID" value="ACQ94711.1"/>
    <property type="molecule type" value="Genomic_DNA"/>
</dbReference>
<dbReference type="RefSeq" id="WP_015880160.1">
    <property type="nucleotide sequence ID" value="NC_012691.1"/>
</dbReference>
<dbReference type="SMR" id="C4LDV0"/>
<dbReference type="STRING" id="595494.Tola_3123"/>
<dbReference type="KEGG" id="tau:Tola_3123"/>
<dbReference type="eggNOG" id="COG1965">
    <property type="taxonomic scope" value="Bacteria"/>
</dbReference>
<dbReference type="HOGENOM" id="CLU_080880_3_0_6"/>
<dbReference type="OrthoDB" id="285675at2"/>
<dbReference type="Proteomes" id="UP000009073">
    <property type="component" value="Chromosome"/>
</dbReference>
<dbReference type="GO" id="GO:0005829">
    <property type="term" value="C:cytosol"/>
    <property type="evidence" value="ECO:0007669"/>
    <property type="project" value="TreeGrafter"/>
</dbReference>
<dbReference type="GO" id="GO:0008199">
    <property type="term" value="F:ferric iron binding"/>
    <property type="evidence" value="ECO:0007669"/>
    <property type="project" value="InterPro"/>
</dbReference>
<dbReference type="GO" id="GO:0008198">
    <property type="term" value="F:ferrous iron binding"/>
    <property type="evidence" value="ECO:0007669"/>
    <property type="project" value="TreeGrafter"/>
</dbReference>
<dbReference type="GO" id="GO:0016226">
    <property type="term" value="P:iron-sulfur cluster assembly"/>
    <property type="evidence" value="ECO:0007669"/>
    <property type="project" value="UniProtKB-UniRule"/>
</dbReference>
<dbReference type="CDD" id="cd00503">
    <property type="entry name" value="Frataxin"/>
    <property type="match status" value="1"/>
</dbReference>
<dbReference type="Gene3D" id="3.30.920.10">
    <property type="entry name" value="Frataxin/CyaY"/>
    <property type="match status" value="1"/>
</dbReference>
<dbReference type="HAMAP" id="MF_00142">
    <property type="entry name" value="CyaY"/>
    <property type="match status" value="1"/>
</dbReference>
<dbReference type="InterPro" id="IPR047584">
    <property type="entry name" value="CyaY"/>
</dbReference>
<dbReference type="InterPro" id="IPR002908">
    <property type="entry name" value="Frataxin/CyaY"/>
</dbReference>
<dbReference type="InterPro" id="IPR036524">
    <property type="entry name" value="Frataxin/CyaY_sf"/>
</dbReference>
<dbReference type="InterPro" id="IPR020895">
    <property type="entry name" value="Frataxin_CS"/>
</dbReference>
<dbReference type="NCBIfam" id="TIGR03421">
    <property type="entry name" value="FeS_CyaY"/>
    <property type="match status" value="1"/>
</dbReference>
<dbReference type="PANTHER" id="PTHR16821">
    <property type="entry name" value="FRATAXIN"/>
    <property type="match status" value="1"/>
</dbReference>
<dbReference type="PANTHER" id="PTHR16821:SF2">
    <property type="entry name" value="FRATAXIN, MITOCHONDRIAL"/>
    <property type="match status" value="1"/>
</dbReference>
<dbReference type="Pfam" id="PF01491">
    <property type="entry name" value="Frataxin_Cyay"/>
    <property type="match status" value="1"/>
</dbReference>
<dbReference type="SMART" id="SM01219">
    <property type="entry name" value="Frataxin_Cyay"/>
    <property type="match status" value="1"/>
</dbReference>
<dbReference type="SUPFAM" id="SSF55387">
    <property type="entry name" value="Frataxin/Nqo15-like"/>
    <property type="match status" value="1"/>
</dbReference>
<dbReference type="PROSITE" id="PS01344">
    <property type="entry name" value="FRATAXIN_1"/>
    <property type="match status" value="1"/>
</dbReference>
<dbReference type="PROSITE" id="PS50810">
    <property type="entry name" value="FRATAXIN_2"/>
    <property type="match status" value="1"/>
</dbReference>
<gene>
    <name evidence="1" type="primary">cyaY</name>
    <name type="ordered locus">Tola_3123</name>
</gene>
<sequence>MKDSEFHALVEGRYQFIEQAIDNCDTDIDCELNSGVVTLTFVNGSKIIINKQEPLHQIWVATRENGYHFDWKDGKWIDNRGGRELIELLSDACSKQSGEKVTLG</sequence>